<dbReference type="EC" id="1.4.4.2" evidence="1"/>
<dbReference type="EMBL" id="BA000002">
    <property type="protein sequence ID" value="BAA81132.2"/>
    <property type="molecule type" value="Genomic_DNA"/>
</dbReference>
<dbReference type="PIR" id="D72518">
    <property type="entry name" value="D72518"/>
</dbReference>
<dbReference type="RefSeq" id="WP_010866807.1">
    <property type="nucleotide sequence ID" value="NC_000854.2"/>
</dbReference>
<dbReference type="SMR" id="Q9YA18"/>
<dbReference type="STRING" id="272557.APE_2121.1"/>
<dbReference type="EnsemblBacteria" id="BAA81132">
    <property type="protein sequence ID" value="BAA81132"/>
    <property type="gene ID" value="APE_2121.1"/>
</dbReference>
<dbReference type="GeneID" id="1445208"/>
<dbReference type="KEGG" id="ape:APE_2121.1"/>
<dbReference type="PATRIC" id="fig|272557.25.peg.1412"/>
<dbReference type="eggNOG" id="arCOG00076">
    <property type="taxonomic scope" value="Archaea"/>
</dbReference>
<dbReference type="Proteomes" id="UP000002518">
    <property type="component" value="Chromosome"/>
</dbReference>
<dbReference type="GO" id="GO:0005829">
    <property type="term" value="C:cytosol"/>
    <property type="evidence" value="ECO:0007669"/>
    <property type="project" value="TreeGrafter"/>
</dbReference>
<dbReference type="GO" id="GO:0005960">
    <property type="term" value="C:glycine cleavage complex"/>
    <property type="evidence" value="ECO:0007669"/>
    <property type="project" value="TreeGrafter"/>
</dbReference>
<dbReference type="GO" id="GO:0016594">
    <property type="term" value="F:glycine binding"/>
    <property type="evidence" value="ECO:0007669"/>
    <property type="project" value="TreeGrafter"/>
</dbReference>
<dbReference type="GO" id="GO:0004375">
    <property type="term" value="F:glycine dehydrogenase (decarboxylating) activity"/>
    <property type="evidence" value="ECO:0007669"/>
    <property type="project" value="UniProtKB-EC"/>
</dbReference>
<dbReference type="GO" id="GO:0030170">
    <property type="term" value="F:pyridoxal phosphate binding"/>
    <property type="evidence" value="ECO:0007669"/>
    <property type="project" value="TreeGrafter"/>
</dbReference>
<dbReference type="GO" id="GO:0019464">
    <property type="term" value="P:glycine decarboxylation via glycine cleavage system"/>
    <property type="evidence" value="ECO:0007669"/>
    <property type="project" value="UniProtKB-UniRule"/>
</dbReference>
<dbReference type="FunFam" id="3.40.640.10:FF:000224">
    <property type="entry name" value="Probable glycine dehydrogenase (decarboxylating) subunit 2"/>
    <property type="match status" value="1"/>
</dbReference>
<dbReference type="Gene3D" id="6.20.440.10">
    <property type="match status" value="1"/>
</dbReference>
<dbReference type="Gene3D" id="3.90.1150.10">
    <property type="entry name" value="Aspartate Aminotransferase, domain 1"/>
    <property type="match status" value="1"/>
</dbReference>
<dbReference type="Gene3D" id="3.40.640.10">
    <property type="entry name" value="Type I PLP-dependent aspartate aminotransferase-like (Major domain)"/>
    <property type="match status" value="1"/>
</dbReference>
<dbReference type="HAMAP" id="MF_00713">
    <property type="entry name" value="GcvPB"/>
    <property type="match status" value="1"/>
</dbReference>
<dbReference type="InterPro" id="IPR023012">
    <property type="entry name" value="GcvPB"/>
</dbReference>
<dbReference type="InterPro" id="IPR049316">
    <property type="entry name" value="GDC-P_C"/>
</dbReference>
<dbReference type="InterPro" id="IPR020581">
    <property type="entry name" value="GDC_P"/>
</dbReference>
<dbReference type="InterPro" id="IPR015424">
    <property type="entry name" value="PyrdxlP-dep_Trfase"/>
</dbReference>
<dbReference type="InterPro" id="IPR015421">
    <property type="entry name" value="PyrdxlP-dep_Trfase_major"/>
</dbReference>
<dbReference type="InterPro" id="IPR015422">
    <property type="entry name" value="PyrdxlP-dep_Trfase_small"/>
</dbReference>
<dbReference type="NCBIfam" id="NF003346">
    <property type="entry name" value="PRK04366.1"/>
    <property type="match status" value="1"/>
</dbReference>
<dbReference type="PANTHER" id="PTHR11773:SF1">
    <property type="entry name" value="GLYCINE DEHYDROGENASE (DECARBOXYLATING), MITOCHONDRIAL"/>
    <property type="match status" value="1"/>
</dbReference>
<dbReference type="PANTHER" id="PTHR11773">
    <property type="entry name" value="GLYCINE DEHYDROGENASE, DECARBOXYLATING"/>
    <property type="match status" value="1"/>
</dbReference>
<dbReference type="Pfam" id="PF21478">
    <property type="entry name" value="GcvP2_C"/>
    <property type="match status" value="1"/>
</dbReference>
<dbReference type="SUPFAM" id="SSF53383">
    <property type="entry name" value="PLP-dependent transferases"/>
    <property type="match status" value="1"/>
</dbReference>
<sequence>MWRQSRWNEPLITEMSRRGRRGALPPRPDEKVVKEVGPLKLPQSLARGSPPSLPEVSEVEVVRHYTRLSQMAYGVDNGPVPLGSCTMKYNPRVAARLAFDPRLETLHPLQDDETVQGVLEAIYMVQEWLRHITGMDACTVHPAAGSQGELAGVLMIKRFHEMRGDLDKRRVIIVPDSAHGTNPASAAMGGFQVVEVPTGDDGNVDMEALKAAVGGDTAGLMITNPSTLGLFEENILEISRLVHEAGGLLYYDGANLNGIIGRARPGDMEFDIAHVNLHKTFSVPHGGGGPGSGPVCVKRVEVVDGVTLEDLLPGPRVVYSREEGLYRVRPPGRWSVGRLRAWIANTLAVLWAYAYILAMGPQGLRLAGEVSVVNTNYFIRLMEGHWGYSLPYAPSRPRKHEVVLSAKPLKRETGATAEDVAKGLLDAGLYAPTIYFPLIVEEALMIEFTESETKENIEAYAARLKEIAEEARRDPSTPRKWPRNTTSARVDNVRANHPRTVTPTWRVEVLRRQGKLGPLR</sequence>
<reference key="1">
    <citation type="journal article" date="1999" name="DNA Res.">
        <title>Complete genome sequence of an aerobic hyper-thermophilic crenarchaeon, Aeropyrum pernix K1.</title>
        <authorList>
            <person name="Kawarabayasi Y."/>
            <person name="Hino Y."/>
            <person name="Horikawa H."/>
            <person name="Yamazaki S."/>
            <person name="Haikawa Y."/>
            <person name="Jin-no K."/>
            <person name="Takahashi M."/>
            <person name="Sekine M."/>
            <person name="Baba S."/>
            <person name="Ankai A."/>
            <person name="Kosugi H."/>
            <person name="Hosoyama A."/>
            <person name="Fukui S."/>
            <person name="Nagai Y."/>
            <person name="Nishijima K."/>
            <person name="Nakazawa H."/>
            <person name="Takamiya M."/>
            <person name="Masuda S."/>
            <person name="Funahashi T."/>
            <person name="Tanaka T."/>
            <person name="Kudoh Y."/>
            <person name="Yamazaki J."/>
            <person name="Kushida N."/>
            <person name="Oguchi A."/>
            <person name="Aoki K."/>
            <person name="Kubota K."/>
            <person name="Nakamura Y."/>
            <person name="Nomura N."/>
            <person name="Sako Y."/>
            <person name="Kikuchi H."/>
        </authorList>
    </citation>
    <scope>NUCLEOTIDE SEQUENCE [LARGE SCALE GENOMIC DNA]</scope>
    <source>
        <strain>ATCC 700893 / DSM 11879 / JCM 9820 / NBRC 100138 / K1</strain>
    </source>
</reference>
<organism>
    <name type="scientific">Aeropyrum pernix (strain ATCC 700893 / DSM 11879 / JCM 9820 / NBRC 100138 / K1)</name>
    <dbReference type="NCBI Taxonomy" id="272557"/>
    <lineage>
        <taxon>Archaea</taxon>
        <taxon>Thermoproteota</taxon>
        <taxon>Thermoprotei</taxon>
        <taxon>Desulfurococcales</taxon>
        <taxon>Desulfurococcaceae</taxon>
        <taxon>Aeropyrum</taxon>
    </lineage>
</organism>
<feature type="chain" id="PRO_0000167025" description="Probable glycine dehydrogenase (decarboxylating) subunit 2">
    <location>
        <begin position="1"/>
        <end position="520"/>
    </location>
</feature>
<feature type="region of interest" description="Disordered" evidence="2">
    <location>
        <begin position="1"/>
        <end position="29"/>
    </location>
</feature>
<feature type="modified residue" description="N6-(pyridoxal phosphate)lysine" evidence="1">
    <location>
        <position position="279"/>
    </location>
</feature>
<proteinExistence type="inferred from homology"/>
<comment type="function">
    <text evidence="1">The glycine cleavage system catalyzes the degradation of glycine. The P protein binds the alpha-amino group of glycine through its pyridoxal phosphate cofactor; CO(2) is released and the remaining methylamine moiety is then transferred to the lipoamide cofactor of the H protein.</text>
</comment>
<comment type="catalytic activity">
    <reaction evidence="1">
        <text>N(6)-[(R)-lipoyl]-L-lysyl-[glycine-cleavage complex H protein] + glycine + H(+) = N(6)-[(R)-S(8)-aminomethyldihydrolipoyl]-L-lysyl-[glycine-cleavage complex H protein] + CO2</text>
        <dbReference type="Rhea" id="RHEA:24304"/>
        <dbReference type="Rhea" id="RHEA-COMP:10494"/>
        <dbReference type="Rhea" id="RHEA-COMP:10495"/>
        <dbReference type="ChEBI" id="CHEBI:15378"/>
        <dbReference type="ChEBI" id="CHEBI:16526"/>
        <dbReference type="ChEBI" id="CHEBI:57305"/>
        <dbReference type="ChEBI" id="CHEBI:83099"/>
        <dbReference type="ChEBI" id="CHEBI:83143"/>
        <dbReference type="EC" id="1.4.4.2"/>
    </reaction>
</comment>
<comment type="cofactor">
    <cofactor evidence="1">
        <name>pyridoxal 5'-phosphate</name>
        <dbReference type="ChEBI" id="CHEBI:597326"/>
    </cofactor>
</comment>
<comment type="subunit">
    <text evidence="1">The glycine cleavage system is composed of four proteins: P, T, L and H. In this organism, the P 'protein' is a heterodimer of two subunits.</text>
</comment>
<comment type="similarity">
    <text evidence="1">Belongs to the GcvP family. C-terminal subunit subfamily.</text>
</comment>
<accession>Q9YA18</accession>
<evidence type="ECO:0000255" key="1">
    <source>
        <dbReference type="HAMAP-Rule" id="MF_00713"/>
    </source>
</evidence>
<evidence type="ECO:0000256" key="2">
    <source>
        <dbReference type="SAM" id="MobiDB-lite"/>
    </source>
</evidence>
<protein>
    <recommendedName>
        <fullName evidence="1">Probable glycine dehydrogenase (decarboxylating) subunit 2</fullName>
        <ecNumber evidence="1">1.4.4.2</ecNumber>
    </recommendedName>
    <alternativeName>
        <fullName evidence="1">Glycine cleavage system P-protein subunit 2</fullName>
    </alternativeName>
    <alternativeName>
        <fullName evidence="1">Glycine decarboxylase subunit 2</fullName>
    </alternativeName>
    <alternativeName>
        <fullName evidence="1">Glycine dehydrogenase (aminomethyl-transferring) subunit 2</fullName>
    </alternativeName>
</protein>
<gene>
    <name evidence="1" type="primary">gcvPB</name>
    <name type="ordered locus">APE_2121.1</name>
</gene>
<keyword id="KW-0560">Oxidoreductase</keyword>
<keyword id="KW-0663">Pyridoxal phosphate</keyword>
<keyword id="KW-1185">Reference proteome</keyword>
<name>GCSPB_AERPE</name>